<organism>
    <name type="scientific">Candida albicans (strain SC5314 / ATCC MYA-2876)</name>
    <name type="common">Yeast</name>
    <dbReference type="NCBI Taxonomy" id="237561"/>
    <lineage>
        <taxon>Eukaryota</taxon>
        <taxon>Fungi</taxon>
        <taxon>Dikarya</taxon>
        <taxon>Ascomycota</taxon>
        <taxon>Saccharomycotina</taxon>
        <taxon>Pichiomycetes</taxon>
        <taxon>Debaryomycetaceae</taxon>
        <taxon>Candida/Lodderomyces clade</taxon>
        <taxon>Candida</taxon>
    </lineage>
</organism>
<sequence length="428" mass="47889">MCDVVLGSQWGDEGKGKLVDLLCDDIDVCARCQGGNNAGHTIVVGKVKYDFHMLPSGLVNPKCQNLVGSGVVIHVPSFFAELENLEAKGLDCRDRLFVSSRAHLVFDFHQRTDKLKEAELSTNKKSIGTTGKGIGPTYSTKASRSGIRVHHLVNPDPEAWEEFKTRYLRLVESRQKRYGEFEYDPKEELARFEKYRETLRPFVVDSVNFMHEAIAANKKILVEGANALMLDIDFGTYPYVTSSSTGIGGVLTGLGIPPRTIRNVYGVVKAYTTRVGEGPFPTEQLNKVGETLQDVGAEYGVTTGRKRRCGWLDLVVLKYSNSINGYTSLNITKLDVLDKFKEIEVGVAYKLNGKELPSFPEDLIDLAKVEVVYKKFPGWEQDITGIKKYEDLPENAKNYLKFIEDYLQVPIQWVGTGPARDSMLEKKI</sequence>
<dbReference type="EC" id="6.3.4.4" evidence="2"/>
<dbReference type="EMBL" id="CP017623">
    <property type="protein sequence ID" value="AOW26596.1"/>
    <property type="molecule type" value="Genomic_DNA"/>
</dbReference>
<dbReference type="RefSeq" id="XP_723513.1">
    <property type="nucleotide sequence ID" value="XM_718420.1"/>
</dbReference>
<dbReference type="SMR" id="P0CH96"/>
<dbReference type="FunCoup" id="P0CH96">
    <property type="interactions" value="841"/>
</dbReference>
<dbReference type="STRING" id="237561.P0CH96"/>
<dbReference type="EnsemblFungi" id="C1_09640W_A-T">
    <property type="protein sequence ID" value="C1_09640W_A-T-p1"/>
    <property type="gene ID" value="C1_09640W_A"/>
</dbReference>
<dbReference type="GeneID" id="3634869"/>
<dbReference type="KEGG" id="cal:CAALFM_C109640WA"/>
<dbReference type="CGD" id="CAL0000175348">
    <property type="gene designation" value="ADE12"/>
</dbReference>
<dbReference type="VEuPathDB" id="FungiDB:C1_09640W_A"/>
<dbReference type="eggNOG" id="KOG1355">
    <property type="taxonomic scope" value="Eukaryota"/>
</dbReference>
<dbReference type="HOGENOM" id="CLU_029848_3_2_1"/>
<dbReference type="InParanoid" id="P0CH96"/>
<dbReference type="OMA" id="FHHAKPI"/>
<dbReference type="OrthoDB" id="10265645at2759"/>
<dbReference type="UniPathway" id="UPA00075">
    <property type="reaction ID" value="UER00335"/>
</dbReference>
<dbReference type="PRO" id="PR:P0CH96"/>
<dbReference type="Proteomes" id="UP000000559">
    <property type="component" value="Chromosome 1"/>
</dbReference>
<dbReference type="GO" id="GO:0005737">
    <property type="term" value="C:cytoplasm"/>
    <property type="evidence" value="ECO:0000318"/>
    <property type="project" value="GO_Central"/>
</dbReference>
<dbReference type="GO" id="GO:0004019">
    <property type="term" value="F:adenylosuccinate synthase activity"/>
    <property type="evidence" value="ECO:0000318"/>
    <property type="project" value="GO_Central"/>
</dbReference>
<dbReference type="GO" id="GO:0005525">
    <property type="term" value="F:GTP binding"/>
    <property type="evidence" value="ECO:0007669"/>
    <property type="project" value="UniProtKB-UniRule"/>
</dbReference>
<dbReference type="GO" id="GO:0000287">
    <property type="term" value="F:magnesium ion binding"/>
    <property type="evidence" value="ECO:0007669"/>
    <property type="project" value="UniProtKB-UniRule"/>
</dbReference>
<dbReference type="GO" id="GO:0044208">
    <property type="term" value="P:'de novo' AMP biosynthetic process"/>
    <property type="evidence" value="ECO:0000318"/>
    <property type="project" value="GO_Central"/>
</dbReference>
<dbReference type="GO" id="GO:0046040">
    <property type="term" value="P:IMP metabolic process"/>
    <property type="evidence" value="ECO:0000318"/>
    <property type="project" value="GO_Central"/>
</dbReference>
<dbReference type="CDD" id="cd03108">
    <property type="entry name" value="AdSS"/>
    <property type="match status" value="1"/>
</dbReference>
<dbReference type="FunFam" id="3.90.170.10:FF:000001">
    <property type="entry name" value="Adenylosuccinate synthetase"/>
    <property type="match status" value="1"/>
</dbReference>
<dbReference type="FunFam" id="1.10.300.10:FF:000002">
    <property type="entry name" value="Adenylosuccinate synthetase, chloroplastic"/>
    <property type="match status" value="1"/>
</dbReference>
<dbReference type="Gene3D" id="3.40.440.10">
    <property type="entry name" value="Adenylosuccinate Synthetase, subunit A, domain 1"/>
    <property type="match status" value="1"/>
</dbReference>
<dbReference type="Gene3D" id="1.10.300.10">
    <property type="entry name" value="Adenylosuccinate Synthetase, subunit A, domain 2"/>
    <property type="match status" value="1"/>
</dbReference>
<dbReference type="Gene3D" id="3.90.170.10">
    <property type="entry name" value="Adenylosuccinate Synthetase, subunit A, domain 3"/>
    <property type="match status" value="1"/>
</dbReference>
<dbReference type="HAMAP" id="MF_00011">
    <property type="entry name" value="Adenylosucc_synth"/>
    <property type="match status" value="1"/>
</dbReference>
<dbReference type="InterPro" id="IPR018220">
    <property type="entry name" value="Adenylosuccin_syn_GTP-bd"/>
</dbReference>
<dbReference type="InterPro" id="IPR033128">
    <property type="entry name" value="Adenylosuccin_syn_Lys_AS"/>
</dbReference>
<dbReference type="InterPro" id="IPR042109">
    <property type="entry name" value="Adenylosuccinate_synth_dom1"/>
</dbReference>
<dbReference type="InterPro" id="IPR042110">
    <property type="entry name" value="Adenylosuccinate_synth_dom2"/>
</dbReference>
<dbReference type="InterPro" id="IPR042111">
    <property type="entry name" value="Adenylosuccinate_synth_dom3"/>
</dbReference>
<dbReference type="InterPro" id="IPR001114">
    <property type="entry name" value="Adenylosuccinate_synthetase"/>
</dbReference>
<dbReference type="InterPro" id="IPR027417">
    <property type="entry name" value="P-loop_NTPase"/>
</dbReference>
<dbReference type="NCBIfam" id="NF002223">
    <property type="entry name" value="PRK01117.1"/>
    <property type="match status" value="1"/>
</dbReference>
<dbReference type="NCBIfam" id="TIGR00184">
    <property type="entry name" value="purA"/>
    <property type="match status" value="1"/>
</dbReference>
<dbReference type="PANTHER" id="PTHR11846">
    <property type="entry name" value="ADENYLOSUCCINATE SYNTHETASE"/>
    <property type="match status" value="1"/>
</dbReference>
<dbReference type="PANTHER" id="PTHR11846:SF0">
    <property type="entry name" value="ADENYLOSUCCINATE SYNTHETASE"/>
    <property type="match status" value="1"/>
</dbReference>
<dbReference type="Pfam" id="PF00709">
    <property type="entry name" value="Adenylsucc_synt"/>
    <property type="match status" value="1"/>
</dbReference>
<dbReference type="SMART" id="SM00788">
    <property type="entry name" value="Adenylsucc_synt"/>
    <property type="match status" value="1"/>
</dbReference>
<dbReference type="SUPFAM" id="SSF52540">
    <property type="entry name" value="P-loop containing nucleoside triphosphate hydrolases"/>
    <property type="match status" value="1"/>
</dbReference>
<dbReference type="PROSITE" id="PS01266">
    <property type="entry name" value="ADENYLOSUCCIN_SYN_1"/>
    <property type="match status" value="1"/>
</dbReference>
<dbReference type="PROSITE" id="PS00513">
    <property type="entry name" value="ADENYLOSUCCIN_SYN_2"/>
    <property type="match status" value="1"/>
</dbReference>
<protein>
    <recommendedName>
        <fullName evidence="2">Adenylosuccinate synthetase</fullName>
        <shortName evidence="2">AMPSase</shortName>
        <shortName evidence="2">AdSS</shortName>
        <ecNumber evidence="2">6.3.4.4</ecNumber>
    </recommendedName>
    <alternativeName>
        <fullName evidence="2">IMP--aspartate ligase</fullName>
    </alternativeName>
</protein>
<evidence type="ECO:0000250" key="1"/>
<evidence type="ECO:0000255" key="2">
    <source>
        <dbReference type="HAMAP-Rule" id="MF_03125"/>
    </source>
</evidence>
<feature type="chain" id="PRO_0000399326" description="Adenylosuccinate synthetase">
    <location>
        <begin position="1"/>
        <end position="428"/>
    </location>
</feature>
<feature type="active site" description="Proton acceptor" evidence="2">
    <location>
        <position position="12"/>
    </location>
</feature>
<feature type="active site" description="Proton donor" evidence="2">
    <location>
        <position position="40"/>
    </location>
</feature>
<feature type="binding site" evidence="2">
    <location>
        <begin position="11"/>
        <end position="17"/>
    </location>
    <ligand>
        <name>GTP</name>
        <dbReference type="ChEBI" id="CHEBI:37565"/>
    </ligand>
</feature>
<feature type="binding site" description="in other chain" evidence="2">
    <location>
        <begin position="12"/>
        <end position="15"/>
    </location>
    <ligand>
        <name>IMP</name>
        <dbReference type="ChEBI" id="CHEBI:58053"/>
        <note>ligand shared between dimeric partners</note>
    </ligand>
</feature>
<feature type="binding site" evidence="2">
    <location>
        <position position="12"/>
    </location>
    <ligand>
        <name>Mg(2+)</name>
        <dbReference type="ChEBI" id="CHEBI:18420"/>
    </ligand>
</feature>
<feature type="binding site" description="in other chain" evidence="2">
    <location>
        <begin position="37"/>
        <end position="40"/>
    </location>
    <ligand>
        <name>IMP</name>
        <dbReference type="ChEBI" id="CHEBI:58053"/>
        <note>ligand shared between dimeric partners</note>
    </ligand>
</feature>
<feature type="binding site" evidence="2">
    <location>
        <begin position="39"/>
        <end position="41"/>
    </location>
    <ligand>
        <name>GTP</name>
        <dbReference type="ChEBI" id="CHEBI:37565"/>
    </ligand>
</feature>
<feature type="binding site" evidence="2">
    <location>
        <position position="39"/>
    </location>
    <ligand>
        <name>Mg(2+)</name>
        <dbReference type="ChEBI" id="CHEBI:18420"/>
    </ligand>
</feature>
<feature type="binding site" description="in other chain" evidence="2">
    <location>
        <position position="130"/>
    </location>
    <ligand>
        <name>IMP</name>
        <dbReference type="ChEBI" id="CHEBI:58053"/>
        <note>ligand shared between dimeric partners</note>
    </ligand>
</feature>
<feature type="binding site" evidence="2">
    <location>
        <position position="144"/>
    </location>
    <ligand>
        <name>IMP</name>
        <dbReference type="ChEBI" id="CHEBI:58053"/>
        <note>ligand shared between dimeric partners</note>
    </ligand>
</feature>
<feature type="binding site" description="in other chain" evidence="2">
    <location>
        <position position="226"/>
    </location>
    <ligand>
        <name>IMP</name>
        <dbReference type="ChEBI" id="CHEBI:58053"/>
        <note>ligand shared between dimeric partners</note>
    </ligand>
</feature>
<feature type="binding site" description="in other chain" evidence="2">
    <location>
        <position position="241"/>
    </location>
    <ligand>
        <name>IMP</name>
        <dbReference type="ChEBI" id="CHEBI:58053"/>
        <note>ligand shared between dimeric partners</note>
    </ligand>
</feature>
<feature type="binding site" evidence="2">
    <location>
        <begin position="301"/>
        <end position="307"/>
    </location>
    <ligand>
        <name>substrate</name>
    </ligand>
</feature>
<feature type="binding site" description="in other chain" evidence="2">
    <location>
        <position position="305"/>
    </location>
    <ligand>
        <name>IMP</name>
        <dbReference type="ChEBI" id="CHEBI:58053"/>
        <note>ligand shared between dimeric partners</note>
    </ligand>
</feature>
<feature type="binding site" evidence="2">
    <location>
        <position position="307"/>
    </location>
    <ligand>
        <name>GTP</name>
        <dbReference type="ChEBI" id="CHEBI:37565"/>
    </ligand>
</feature>
<feature type="binding site" evidence="2">
    <location>
        <begin position="333"/>
        <end position="335"/>
    </location>
    <ligand>
        <name>GTP</name>
        <dbReference type="ChEBI" id="CHEBI:37565"/>
    </ligand>
</feature>
<feature type="binding site" evidence="2">
    <location>
        <begin position="415"/>
        <end position="417"/>
    </location>
    <ligand>
        <name>GTP</name>
        <dbReference type="ChEBI" id="CHEBI:37565"/>
    </ligand>
</feature>
<keyword id="KW-0963">Cytoplasm</keyword>
<keyword id="KW-0342">GTP-binding</keyword>
<keyword id="KW-0436">Ligase</keyword>
<keyword id="KW-0460">Magnesium</keyword>
<keyword id="KW-0479">Metal-binding</keyword>
<keyword id="KW-0547">Nucleotide-binding</keyword>
<keyword id="KW-0658">Purine biosynthesis</keyword>
<keyword id="KW-1185">Reference proteome</keyword>
<reference key="1">
    <citation type="journal article" date="2004" name="Proc. Natl. Acad. Sci. U.S.A.">
        <title>The diploid genome sequence of Candida albicans.</title>
        <authorList>
            <person name="Jones T."/>
            <person name="Federspiel N.A."/>
            <person name="Chibana H."/>
            <person name="Dungan J."/>
            <person name="Kalman S."/>
            <person name="Magee B.B."/>
            <person name="Newport G."/>
            <person name="Thorstenson Y.R."/>
            <person name="Agabian N."/>
            <person name="Magee P.T."/>
            <person name="Davis R.W."/>
            <person name="Scherer S."/>
        </authorList>
    </citation>
    <scope>NUCLEOTIDE SEQUENCE [LARGE SCALE GENOMIC DNA]</scope>
    <source>
        <strain>SC5314 / ATCC MYA-2876</strain>
    </source>
</reference>
<reference key="2">
    <citation type="journal article" date="2007" name="Genome Biol.">
        <title>Assembly of the Candida albicans genome into sixteen supercontigs aligned on the eight chromosomes.</title>
        <authorList>
            <person name="van het Hoog M."/>
            <person name="Rast T.J."/>
            <person name="Martchenko M."/>
            <person name="Grindle S."/>
            <person name="Dignard D."/>
            <person name="Hogues H."/>
            <person name="Cuomo C."/>
            <person name="Berriman M."/>
            <person name="Scherer S."/>
            <person name="Magee B.B."/>
            <person name="Whiteway M."/>
            <person name="Chibana H."/>
            <person name="Nantel A."/>
            <person name="Magee P.T."/>
        </authorList>
    </citation>
    <scope>GENOME REANNOTATION</scope>
    <source>
        <strain>SC5314 / ATCC MYA-2876</strain>
    </source>
</reference>
<reference key="3">
    <citation type="journal article" date="2013" name="Genome Biol.">
        <title>Assembly of a phased diploid Candida albicans genome facilitates allele-specific measurements and provides a simple model for repeat and indel structure.</title>
        <authorList>
            <person name="Muzzey D."/>
            <person name="Schwartz K."/>
            <person name="Weissman J.S."/>
            <person name="Sherlock G."/>
        </authorList>
    </citation>
    <scope>NUCLEOTIDE SEQUENCE [LARGE SCALE GENOMIC DNA]</scope>
    <scope>GENOME REANNOTATION</scope>
    <source>
        <strain>SC5314 / ATCC MYA-2876</strain>
    </source>
</reference>
<comment type="function">
    <text evidence="1">Plays an important role in the de novo pathway and in the salvage pathway of purine nucleotide biosynthesis. Catalyzes the first committed step in the biosynthesis of AMP from IMP (By similarity).</text>
</comment>
<comment type="catalytic activity">
    <reaction evidence="2">
        <text>IMP + L-aspartate + GTP = N(6)-(1,2-dicarboxyethyl)-AMP + GDP + phosphate + 2 H(+)</text>
        <dbReference type="Rhea" id="RHEA:15753"/>
        <dbReference type="ChEBI" id="CHEBI:15378"/>
        <dbReference type="ChEBI" id="CHEBI:29991"/>
        <dbReference type="ChEBI" id="CHEBI:37565"/>
        <dbReference type="ChEBI" id="CHEBI:43474"/>
        <dbReference type="ChEBI" id="CHEBI:57567"/>
        <dbReference type="ChEBI" id="CHEBI:58053"/>
        <dbReference type="ChEBI" id="CHEBI:58189"/>
        <dbReference type="EC" id="6.3.4.4"/>
    </reaction>
</comment>
<comment type="cofactor">
    <cofactor evidence="2">
        <name>Mg(2+)</name>
        <dbReference type="ChEBI" id="CHEBI:18420"/>
    </cofactor>
    <text evidence="2">Binds 1 Mg(2+) ion per subunit.</text>
</comment>
<comment type="pathway">
    <text evidence="2">Purine metabolism; AMP biosynthesis via de novo pathway; AMP from IMP: step 1/2.</text>
</comment>
<comment type="subunit">
    <text evidence="2">Homodimer.</text>
</comment>
<comment type="subcellular location">
    <subcellularLocation>
        <location evidence="2">Cytoplasm</location>
    </subcellularLocation>
</comment>
<comment type="similarity">
    <text evidence="2">Belongs to the adenylosuccinate synthetase family.</text>
</comment>
<accession>P0CH96</accession>
<accession>A0A1D8PEP0</accession>
<accession>Q5APD8</accession>
<name>PURA_CANAL</name>
<proteinExistence type="inferred from homology"/>
<gene>
    <name evidence="2" type="primary">ADE12</name>
    <name type="ordered locus">CAALFM_C109640WA</name>
    <name type="ORF">CaO19.12290</name>
    <name type="ORF">CaO19.4827</name>
</gene>